<gene>
    <name evidence="1" type="primary">atpG</name>
    <name type="ordered locus">Bfl007</name>
</gene>
<reference key="1">
    <citation type="journal article" date="2003" name="Proc. Natl. Acad. Sci. U.S.A.">
        <title>The genome sequence of Blochmannia floridanus: comparative analysis of reduced genomes.</title>
        <authorList>
            <person name="Gil R."/>
            <person name="Silva F.J."/>
            <person name="Zientz E."/>
            <person name="Delmotte F."/>
            <person name="Gonzalez-Candelas F."/>
            <person name="Latorre A."/>
            <person name="Rausell C."/>
            <person name="Kamerbeek J."/>
            <person name="Gadau J."/>
            <person name="Hoelldobler B."/>
            <person name="van Ham R.C.H.J."/>
            <person name="Gross R."/>
            <person name="Moya A."/>
        </authorList>
    </citation>
    <scope>NUCLEOTIDE SEQUENCE [LARGE SCALE GENOMIC DNA]</scope>
</reference>
<organism>
    <name type="scientific">Blochmanniella floridana</name>
    <dbReference type="NCBI Taxonomy" id="203907"/>
    <lineage>
        <taxon>Bacteria</taxon>
        <taxon>Pseudomonadati</taxon>
        <taxon>Pseudomonadota</taxon>
        <taxon>Gammaproteobacteria</taxon>
        <taxon>Enterobacterales</taxon>
        <taxon>Enterobacteriaceae</taxon>
        <taxon>ant endosymbionts</taxon>
        <taxon>Candidatus Blochmanniella</taxon>
    </lineage>
</organism>
<dbReference type="EMBL" id="BX248583">
    <property type="protein sequence ID" value="CAD83535.1"/>
    <property type="molecule type" value="Genomic_DNA"/>
</dbReference>
<dbReference type="SMR" id="Q7VQV7"/>
<dbReference type="STRING" id="203907.Bfl007"/>
<dbReference type="KEGG" id="bfl:Bfl007"/>
<dbReference type="eggNOG" id="COG0224">
    <property type="taxonomic scope" value="Bacteria"/>
</dbReference>
<dbReference type="HOGENOM" id="CLU_050669_0_1_6"/>
<dbReference type="OrthoDB" id="9812769at2"/>
<dbReference type="Proteomes" id="UP000002192">
    <property type="component" value="Chromosome"/>
</dbReference>
<dbReference type="GO" id="GO:0005886">
    <property type="term" value="C:plasma membrane"/>
    <property type="evidence" value="ECO:0007669"/>
    <property type="project" value="UniProtKB-SubCell"/>
</dbReference>
<dbReference type="GO" id="GO:0045259">
    <property type="term" value="C:proton-transporting ATP synthase complex"/>
    <property type="evidence" value="ECO:0007669"/>
    <property type="project" value="UniProtKB-KW"/>
</dbReference>
<dbReference type="GO" id="GO:0005524">
    <property type="term" value="F:ATP binding"/>
    <property type="evidence" value="ECO:0007669"/>
    <property type="project" value="UniProtKB-UniRule"/>
</dbReference>
<dbReference type="GO" id="GO:0046933">
    <property type="term" value="F:proton-transporting ATP synthase activity, rotational mechanism"/>
    <property type="evidence" value="ECO:0007669"/>
    <property type="project" value="UniProtKB-UniRule"/>
</dbReference>
<dbReference type="GO" id="GO:0042777">
    <property type="term" value="P:proton motive force-driven plasma membrane ATP synthesis"/>
    <property type="evidence" value="ECO:0007669"/>
    <property type="project" value="UniProtKB-UniRule"/>
</dbReference>
<dbReference type="CDD" id="cd12151">
    <property type="entry name" value="F1-ATPase_gamma"/>
    <property type="match status" value="1"/>
</dbReference>
<dbReference type="FunFam" id="1.10.287.80:FF:000005">
    <property type="entry name" value="ATP synthase gamma chain"/>
    <property type="match status" value="1"/>
</dbReference>
<dbReference type="Gene3D" id="3.40.1380.10">
    <property type="match status" value="1"/>
</dbReference>
<dbReference type="Gene3D" id="1.10.287.80">
    <property type="entry name" value="ATP synthase, gamma subunit, helix hairpin domain"/>
    <property type="match status" value="1"/>
</dbReference>
<dbReference type="HAMAP" id="MF_00815">
    <property type="entry name" value="ATP_synth_gamma_bact"/>
    <property type="match status" value="1"/>
</dbReference>
<dbReference type="InterPro" id="IPR035968">
    <property type="entry name" value="ATP_synth_F1_ATPase_gsu"/>
</dbReference>
<dbReference type="InterPro" id="IPR000131">
    <property type="entry name" value="ATP_synth_F1_gsu"/>
</dbReference>
<dbReference type="NCBIfam" id="TIGR01146">
    <property type="entry name" value="ATPsyn_F1gamma"/>
    <property type="match status" value="1"/>
</dbReference>
<dbReference type="NCBIfam" id="NF004144">
    <property type="entry name" value="PRK05621.1-1"/>
    <property type="match status" value="1"/>
</dbReference>
<dbReference type="PANTHER" id="PTHR11693">
    <property type="entry name" value="ATP SYNTHASE GAMMA CHAIN"/>
    <property type="match status" value="1"/>
</dbReference>
<dbReference type="PANTHER" id="PTHR11693:SF22">
    <property type="entry name" value="ATP SYNTHASE SUBUNIT GAMMA, MITOCHONDRIAL"/>
    <property type="match status" value="1"/>
</dbReference>
<dbReference type="Pfam" id="PF00231">
    <property type="entry name" value="ATP-synt"/>
    <property type="match status" value="1"/>
</dbReference>
<dbReference type="PRINTS" id="PR00126">
    <property type="entry name" value="ATPASEGAMMA"/>
</dbReference>
<dbReference type="SUPFAM" id="SSF52943">
    <property type="entry name" value="ATP synthase (F1-ATPase), gamma subunit"/>
    <property type="match status" value="1"/>
</dbReference>
<sequence>MSSIKEVREKIESIRNIQKLSKAMEMIAASKMKKAQRLMLVSQPYTKAIRKVIDHISLGKLEYRHVYLMNREVRSVGYWVISSDRGLAGGLNVNVFRMLLNDISRWNKLNVTIKLAIIGSKAISFFNCIDPNMIVSYVSGIGDVPKMSQLIGLVGTMLQLYCNGQVDRLYLIYNKFINTLSQVPKIIQILPIFSESNNTCVTKHWDYLYEPDSKVLLDTLLNRYIESQVYQGVVENLASEQSARMIAMKTASDNGETIIKDLRVFYNKLRQSKITQELAEIISGSSVI</sequence>
<comment type="function">
    <text evidence="1">Produces ATP from ADP in the presence of a proton gradient across the membrane. The gamma chain is believed to be important in regulating ATPase activity and the flow of protons through the CF(0) complex.</text>
</comment>
<comment type="subunit">
    <text evidence="1">F-type ATPases have 2 components, CF(1) - the catalytic core - and CF(0) - the membrane proton channel. CF(1) has five subunits: alpha(3), beta(3), gamma(1), delta(1), epsilon(1). CF(0) has three main subunits: a, b and c.</text>
</comment>
<comment type="subcellular location">
    <subcellularLocation>
        <location evidence="1">Cell inner membrane</location>
        <topology evidence="1">Peripheral membrane protein</topology>
    </subcellularLocation>
</comment>
<comment type="similarity">
    <text evidence="1">Belongs to the ATPase gamma chain family.</text>
</comment>
<feature type="chain" id="PRO_0000073243" description="ATP synthase gamma chain">
    <location>
        <begin position="1"/>
        <end position="288"/>
    </location>
</feature>
<keyword id="KW-0066">ATP synthesis</keyword>
<keyword id="KW-0997">Cell inner membrane</keyword>
<keyword id="KW-1003">Cell membrane</keyword>
<keyword id="KW-0139">CF(1)</keyword>
<keyword id="KW-0375">Hydrogen ion transport</keyword>
<keyword id="KW-0406">Ion transport</keyword>
<keyword id="KW-0472">Membrane</keyword>
<keyword id="KW-1185">Reference proteome</keyword>
<keyword id="KW-0813">Transport</keyword>
<proteinExistence type="inferred from homology"/>
<accession>Q7VQV7</accession>
<protein>
    <recommendedName>
        <fullName evidence="1">ATP synthase gamma chain</fullName>
    </recommendedName>
    <alternativeName>
        <fullName evidence="1">ATP synthase F1 sector gamma subunit</fullName>
    </alternativeName>
    <alternativeName>
        <fullName evidence="1">F-ATPase gamma subunit</fullName>
    </alternativeName>
</protein>
<evidence type="ECO:0000255" key="1">
    <source>
        <dbReference type="HAMAP-Rule" id="MF_00815"/>
    </source>
</evidence>
<name>ATPG_BLOFL</name>